<proteinExistence type="evidence at protein level"/>
<organism>
    <name type="scientific">Danio rerio</name>
    <name type="common">Zebrafish</name>
    <name type="synonym">Brachydanio rerio</name>
    <dbReference type="NCBI Taxonomy" id="7955"/>
    <lineage>
        <taxon>Eukaryota</taxon>
        <taxon>Metazoa</taxon>
        <taxon>Chordata</taxon>
        <taxon>Craniata</taxon>
        <taxon>Vertebrata</taxon>
        <taxon>Euteleostomi</taxon>
        <taxon>Actinopterygii</taxon>
        <taxon>Neopterygii</taxon>
        <taxon>Teleostei</taxon>
        <taxon>Ostariophysi</taxon>
        <taxon>Cypriniformes</taxon>
        <taxon>Danionidae</taxon>
        <taxon>Danioninae</taxon>
        <taxon>Danio</taxon>
    </lineage>
</organism>
<sequence>MFHGSGLFALLLMVLEWTRPGLSSPLRPICDLRVLDHFIKEAWDAEAAMRTCKDDCSIATNVTVPLTRVDFEVWEAMNIEEQAQEVQSGLHMLNEAIGSLQISNQTEVLQSHIDASIRNIASIRQVLRSLSIPEYVPPTSSGEDKETQKISSISELFQVHVNFLRGKARLLLANAPVCRQGVS</sequence>
<protein>
    <recommendedName>
        <fullName>Erythropoietin</fullName>
    </recommendedName>
    <alternativeName>
        <fullName>Erythropoietin-L2</fullName>
    </alternativeName>
</protein>
<comment type="function">
    <text evidence="3">Erythropoietin is the principal hormone involved in the regulation of erythrocyte differentiation and the maintenance of a physiological level of circulating erythrocyte mass.</text>
</comment>
<comment type="subcellular location">
    <subcellularLocation>
        <location evidence="3">Secreted</location>
    </subcellularLocation>
</comment>
<comment type="tissue specificity">
    <text evidence="3">Expressed in heart and liver.</text>
</comment>
<comment type="PTM">
    <text evidence="3">N-glycosylated.</text>
</comment>
<comment type="similarity">
    <text evidence="4">Belongs to the EPO/TPO family.</text>
</comment>
<gene>
    <name type="primary">epo</name>
</gene>
<feature type="signal peptide" evidence="2">
    <location>
        <begin position="1"/>
        <end position="23"/>
    </location>
</feature>
<feature type="chain" id="PRO_0000313665" description="Erythropoietin">
    <location>
        <begin position="24"/>
        <end position="183"/>
    </location>
</feature>
<feature type="glycosylation site" description="N-linked (GlcNAc...) asparagine" evidence="2">
    <location>
        <position position="61"/>
    </location>
</feature>
<feature type="glycosylation site" description="N-linked (GlcNAc...) asparagine" evidence="2">
    <location>
        <position position="104"/>
    </location>
</feature>
<feature type="disulfide bond" evidence="1">
    <location>
        <begin position="30"/>
        <end position="178"/>
    </location>
</feature>
<feature type="disulfide bond" evidence="1">
    <location>
        <begin position="52"/>
        <end position="56"/>
    </location>
</feature>
<keyword id="KW-1015">Disulfide bond</keyword>
<keyword id="KW-0265">Erythrocyte maturation</keyword>
<keyword id="KW-0325">Glycoprotein</keyword>
<keyword id="KW-0372">Hormone</keyword>
<keyword id="KW-1185">Reference proteome</keyword>
<keyword id="KW-0964">Secreted</keyword>
<keyword id="KW-0732">Signal</keyword>
<name>EPO_DANRE</name>
<accession>Q2XNF5</accession>
<reference key="1">
    <citation type="submission" date="2005-10" db="EMBL/GenBank/DDBJ databases">
        <title>Functional conservation of epo-epor signaling in zebrafish.</title>
        <authorList>
            <person name="Paffett-Lugassy N."/>
            <person name="Yang C."/>
            <person name="Paw B."/>
            <person name="Leschinsky I."/>
            <person name="Barut B."/>
            <person name="Bahary N."/>
            <person name="Caro J."/>
            <person name="Handin R."/>
            <person name="Zon L."/>
        </authorList>
    </citation>
    <scope>NUCLEOTIDE SEQUENCE [MRNA]</scope>
</reference>
<reference key="2">
    <citation type="journal article" date="2007" name="FEBS Lett.">
        <title>The zebrafish erythropoietin: functional identification and biochemical characterization.</title>
        <authorList>
            <person name="Chu C.-Y."/>
            <person name="Cheng C.-H."/>
            <person name="Chen G.-D."/>
            <person name="Chen Y.-C."/>
            <person name="Hung C.-C."/>
            <person name="Huang K.-Y."/>
            <person name="Huang C.-J."/>
        </authorList>
    </citation>
    <scope>NUCLEOTIDE SEQUENCE [MRNA]</scope>
    <scope>FUNCTION</scope>
    <scope>TISSUE SPECIFICITY</scope>
    <scope>SUBCELLULAR LOCATION</scope>
    <scope>GLYCOSYLATION</scope>
</reference>
<dbReference type="EMBL" id="DQ278896">
    <property type="protein sequence ID" value="ABB77436.1"/>
    <property type="molecule type" value="mRNA"/>
</dbReference>
<dbReference type="EMBL" id="EF426727">
    <property type="protein sequence ID" value="ABQ41211.1"/>
    <property type="molecule type" value="mRNA"/>
</dbReference>
<dbReference type="RefSeq" id="NP_001033098.1">
    <property type="nucleotide sequence ID" value="NM_001038009.2"/>
</dbReference>
<dbReference type="SMR" id="Q2XNF5"/>
<dbReference type="FunCoup" id="Q2XNF5">
    <property type="interactions" value="994"/>
</dbReference>
<dbReference type="STRING" id="7955.ENSDARP00000100433"/>
<dbReference type="GlyCosmos" id="Q2XNF5">
    <property type="glycosylation" value="2 sites, No reported glycans"/>
</dbReference>
<dbReference type="PaxDb" id="7955-ENSDARP00000100433"/>
<dbReference type="Ensembl" id="ENSDART00000111066">
    <property type="protein sequence ID" value="ENSDARP00000100433"/>
    <property type="gene ID" value="ENSDARG00000055163"/>
</dbReference>
<dbReference type="GeneID" id="100004455"/>
<dbReference type="KEGG" id="dre:100004455"/>
<dbReference type="AGR" id="ZFIN:ZDB-GENE-061218-3"/>
<dbReference type="CTD" id="100004455"/>
<dbReference type="ZFIN" id="ZDB-GENE-061218-3">
    <property type="gene designation" value="epoa"/>
</dbReference>
<dbReference type="eggNOG" id="ENOG502RXRC">
    <property type="taxonomic scope" value="Eukaryota"/>
</dbReference>
<dbReference type="InParanoid" id="Q2XNF5"/>
<dbReference type="OMA" id="AMEFPRL"/>
<dbReference type="OrthoDB" id="9892121at2759"/>
<dbReference type="TreeFam" id="TF333413"/>
<dbReference type="PRO" id="PR:Q2XNF5"/>
<dbReference type="Proteomes" id="UP000000437">
    <property type="component" value="Chromosome 7"/>
</dbReference>
<dbReference type="Bgee" id="ENSDARG00000055163">
    <property type="expression patterns" value="Expressed in cardiac ventricle and 27 other cell types or tissues"/>
</dbReference>
<dbReference type="ExpressionAtlas" id="Q2XNF5">
    <property type="expression patterns" value="baseline"/>
</dbReference>
<dbReference type="GO" id="GO:0005615">
    <property type="term" value="C:extracellular space"/>
    <property type="evidence" value="ECO:0000318"/>
    <property type="project" value="GO_Central"/>
</dbReference>
<dbReference type="GO" id="GO:0048471">
    <property type="term" value="C:perinuclear region of cytoplasm"/>
    <property type="evidence" value="ECO:0000314"/>
    <property type="project" value="ZFIN"/>
</dbReference>
<dbReference type="GO" id="GO:0005125">
    <property type="term" value="F:cytokine activity"/>
    <property type="evidence" value="ECO:0000318"/>
    <property type="project" value="GO_Central"/>
</dbReference>
<dbReference type="GO" id="GO:0005128">
    <property type="term" value="F:erythropoietin receptor binding"/>
    <property type="evidence" value="ECO:0007669"/>
    <property type="project" value="InterPro"/>
</dbReference>
<dbReference type="GO" id="GO:0005179">
    <property type="term" value="F:hormone activity"/>
    <property type="evidence" value="ECO:0007669"/>
    <property type="project" value="UniProtKB-KW"/>
</dbReference>
<dbReference type="GO" id="GO:0043249">
    <property type="term" value="P:erythrocyte maturation"/>
    <property type="evidence" value="ECO:0007669"/>
    <property type="project" value="UniProtKB-KW"/>
</dbReference>
<dbReference type="GO" id="GO:0030097">
    <property type="term" value="P:hemopoiesis"/>
    <property type="evidence" value="ECO:0000314"/>
    <property type="project" value="ZFIN"/>
</dbReference>
<dbReference type="GO" id="GO:0048823">
    <property type="term" value="P:nucleate erythrocyte development"/>
    <property type="evidence" value="ECO:0000314"/>
    <property type="project" value="ZFIN"/>
</dbReference>
<dbReference type="GO" id="GO:0048793">
    <property type="term" value="P:pronephros development"/>
    <property type="evidence" value="ECO:0000315"/>
    <property type="project" value="ZFIN"/>
</dbReference>
<dbReference type="GO" id="GO:0014823">
    <property type="term" value="P:response to activity"/>
    <property type="evidence" value="ECO:0000314"/>
    <property type="project" value="ZFIN"/>
</dbReference>
<dbReference type="Gene3D" id="1.20.1250.10">
    <property type="match status" value="1"/>
</dbReference>
<dbReference type="InterPro" id="IPR009079">
    <property type="entry name" value="4_helix_cytokine-like_core"/>
</dbReference>
<dbReference type="InterPro" id="IPR001323">
    <property type="entry name" value="EPO_TPO"/>
</dbReference>
<dbReference type="InterPro" id="IPR003013">
    <property type="entry name" value="Erythroptn"/>
</dbReference>
<dbReference type="PANTHER" id="PTHR10370">
    <property type="entry name" value="ERYTHROPOIETIN"/>
    <property type="match status" value="1"/>
</dbReference>
<dbReference type="PANTHER" id="PTHR10370:SF0">
    <property type="entry name" value="ERYTHROPOIETIN"/>
    <property type="match status" value="1"/>
</dbReference>
<dbReference type="Pfam" id="PF00758">
    <property type="entry name" value="EPO_TPO"/>
    <property type="match status" value="1"/>
</dbReference>
<dbReference type="PIRSF" id="PIRSF001951">
    <property type="entry name" value="EPO"/>
    <property type="match status" value="1"/>
</dbReference>
<dbReference type="PRINTS" id="PR00272">
    <property type="entry name" value="ERYTHROPTN"/>
</dbReference>
<dbReference type="SUPFAM" id="SSF47266">
    <property type="entry name" value="4-helical cytokines"/>
    <property type="match status" value="1"/>
</dbReference>
<evidence type="ECO:0000250" key="1"/>
<evidence type="ECO:0000255" key="2"/>
<evidence type="ECO:0000269" key="3">
    <source>
    </source>
</evidence>
<evidence type="ECO:0000305" key="4"/>